<dbReference type="EC" id="7.6.2.-" evidence="1"/>
<dbReference type="EMBL" id="CP000383">
    <property type="protein sequence ID" value="ABG59496.1"/>
    <property type="status" value="ALT_INIT"/>
    <property type="molecule type" value="Genomic_DNA"/>
</dbReference>
<dbReference type="RefSeq" id="WP_049755537.1">
    <property type="nucleotide sequence ID" value="NC_008255.1"/>
</dbReference>
<dbReference type="SMR" id="Q11SW8"/>
<dbReference type="STRING" id="269798.CHU_2233"/>
<dbReference type="KEGG" id="chu:CHU_2233"/>
<dbReference type="eggNOG" id="COG1136">
    <property type="taxonomic scope" value="Bacteria"/>
</dbReference>
<dbReference type="HOGENOM" id="CLU_000604_1_22_10"/>
<dbReference type="Proteomes" id="UP000001822">
    <property type="component" value="Chromosome"/>
</dbReference>
<dbReference type="GO" id="GO:0005886">
    <property type="term" value="C:plasma membrane"/>
    <property type="evidence" value="ECO:0007669"/>
    <property type="project" value="UniProtKB-SubCell"/>
</dbReference>
<dbReference type="GO" id="GO:0005524">
    <property type="term" value="F:ATP binding"/>
    <property type="evidence" value="ECO:0007669"/>
    <property type="project" value="UniProtKB-KW"/>
</dbReference>
<dbReference type="GO" id="GO:0016887">
    <property type="term" value="F:ATP hydrolysis activity"/>
    <property type="evidence" value="ECO:0007669"/>
    <property type="project" value="InterPro"/>
</dbReference>
<dbReference type="CDD" id="cd03255">
    <property type="entry name" value="ABC_MJ0796_LolCDE_FtsE"/>
    <property type="match status" value="1"/>
</dbReference>
<dbReference type="FunFam" id="3.40.50.300:FF:000230">
    <property type="entry name" value="Lipoprotein-releasing system ATP-binding protein LolD"/>
    <property type="match status" value="1"/>
</dbReference>
<dbReference type="Gene3D" id="3.40.50.300">
    <property type="entry name" value="P-loop containing nucleotide triphosphate hydrolases"/>
    <property type="match status" value="1"/>
</dbReference>
<dbReference type="InterPro" id="IPR003593">
    <property type="entry name" value="AAA+_ATPase"/>
</dbReference>
<dbReference type="InterPro" id="IPR003439">
    <property type="entry name" value="ABC_transporter-like_ATP-bd"/>
</dbReference>
<dbReference type="InterPro" id="IPR017871">
    <property type="entry name" value="ABC_transporter-like_CS"/>
</dbReference>
<dbReference type="InterPro" id="IPR017911">
    <property type="entry name" value="MacB-like_ATP-bd"/>
</dbReference>
<dbReference type="InterPro" id="IPR027417">
    <property type="entry name" value="P-loop_NTPase"/>
</dbReference>
<dbReference type="PANTHER" id="PTHR42798:SF7">
    <property type="entry name" value="ALPHA-D-RIBOSE 1-METHYLPHOSPHONATE 5-TRIPHOSPHATE SYNTHASE SUBUNIT PHNL"/>
    <property type="match status" value="1"/>
</dbReference>
<dbReference type="PANTHER" id="PTHR42798">
    <property type="entry name" value="LIPOPROTEIN-RELEASING SYSTEM ATP-BINDING PROTEIN LOLD"/>
    <property type="match status" value="1"/>
</dbReference>
<dbReference type="Pfam" id="PF00005">
    <property type="entry name" value="ABC_tran"/>
    <property type="match status" value="1"/>
</dbReference>
<dbReference type="SMART" id="SM00382">
    <property type="entry name" value="AAA"/>
    <property type="match status" value="1"/>
</dbReference>
<dbReference type="SUPFAM" id="SSF52540">
    <property type="entry name" value="P-loop containing nucleoside triphosphate hydrolases"/>
    <property type="match status" value="1"/>
</dbReference>
<dbReference type="PROSITE" id="PS00211">
    <property type="entry name" value="ABC_TRANSPORTER_1"/>
    <property type="match status" value="1"/>
</dbReference>
<dbReference type="PROSITE" id="PS50893">
    <property type="entry name" value="ABC_TRANSPORTER_2"/>
    <property type="match status" value="1"/>
</dbReference>
<dbReference type="PROSITE" id="PS51244">
    <property type="entry name" value="LOLD"/>
    <property type="match status" value="1"/>
</dbReference>
<reference key="1">
    <citation type="journal article" date="2007" name="Appl. Environ. Microbiol.">
        <title>Genome sequence of the cellulolytic gliding bacterium Cytophaga hutchinsonii.</title>
        <authorList>
            <person name="Xie G."/>
            <person name="Bruce D.C."/>
            <person name="Challacombe J.F."/>
            <person name="Chertkov O."/>
            <person name="Detter J.C."/>
            <person name="Gilna P."/>
            <person name="Han C.S."/>
            <person name="Lucas S."/>
            <person name="Misra M."/>
            <person name="Myers G.L."/>
            <person name="Richardson P."/>
            <person name="Tapia R."/>
            <person name="Thayer N."/>
            <person name="Thompson L.S."/>
            <person name="Brettin T.S."/>
            <person name="Henrissat B."/>
            <person name="Wilson D.B."/>
            <person name="McBride M.J."/>
        </authorList>
    </citation>
    <scope>NUCLEOTIDE SEQUENCE [LARGE SCALE GENOMIC DNA]</scope>
    <source>
        <strain>ATCC 33406 / DSM 1761 / JCM 20678 / CIP 103989 / IAM 12607 / NBRC 15051 / NCIMB 9469 / D465</strain>
    </source>
</reference>
<keyword id="KW-0067">ATP-binding</keyword>
<keyword id="KW-0997">Cell inner membrane</keyword>
<keyword id="KW-1003">Cell membrane</keyword>
<keyword id="KW-0472">Membrane</keyword>
<keyword id="KW-0547">Nucleotide-binding</keyword>
<keyword id="KW-1185">Reference proteome</keyword>
<keyword id="KW-1278">Translocase</keyword>
<keyword id="KW-0813">Transport</keyword>
<feature type="chain" id="PRO_0000272073" description="Lipoprotein-releasing system ATP-binding protein LolD">
    <location>
        <begin position="1"/>
        <end position="219"/>
    </location>
</feature>
<feature type="domain" description="ABC transporter" evidence="1">
    <location>
        <begin position="5"/>
        <end position="219"/>
    </location>
</feature>
<feature type="binding site" evidence="1">
    <location>
        <begin position="37"/>
        <end position="44"/>
    </location>
    <ligand>
        <name>ATP</name>
        <dbReference type="ChEBI" id="CHEBI:30616"/>
    </ligand>
</feature>
<organism>
    <name type="scientific">Cytophaga hutchinsonii (strain ATCC 33406 / DSM 1761 / CIP 103989 / NBRC 15051 / NCIMB 9469 / D465)</name>
    <dbReference type="NCBI Taxonomy" id="269798"/>
    <lineage>
        <taxon>Bacteria</taxon>
        <taxon>Pseudomonadati</taxon>
        <taxon>Bacteroidota</taxon>
        <taxon>Cytophagia</taxon>
        <taxon>Cytophagales</taxon>
        <taxon>Cytophagaceae</taxon>
        <taxon>Cytophaga</taxon>
    </lineage>
</organism>
<proteinExistence type="inferred from homology"/>
<accession>Q11SW8</accession>
<sequence>MQEILKAGDIFKTYGTVDVLKGIDFSVQQGEVVSIVGASGAGKSTLLHILGSLDRPDTGWVKIKDEEISAMNDKTLSAFRNQHIGFIFQFHNLLPEFTAVENVLLPAMIGKRNLKEAENRAKDLLRFLGLDHRFTHYPNQLSGGEQQRVAVARSLINDPLIVFADEPSGNLDTHNAEELHQLFFDLRKTYNQTFVIVTHNEKLADLSDRKVVMQDGVII</sequence>
<evidence type="ECO:0000255" key="1">
    <source>
        <dbReference type="HAMAP-Rule" id="MF_01708"/>
    </source>
</evidence>
<evidence type="ECO:0000305" key="2"/>
<name>LOLD_CYTH3</name>
<comment type="function">
    <text evidence="1">Part of the ABC transporter complex LolCDE involved in the translocation of mature outer membrane-directed lipoproteins, from the inner membrane to the periplasmic chaperone, LolA. Responsible for the formation of the LolA-lipoprotein complex in an ATP-dependent manner.</text>
</comment>
<comment type="subunit">
    <text evidence="1">The complex is composed of two ATP-binding proteins (LolD) and two transmembrane proteins (LolC and LolE).</text>
</comment>
<comment type="subcellular location">
    <subcellularLocation>
        <location evidence="1">Cell inner membrane</location>
        <topology evidence="1">Peripheral membrane protein</topology>
    </subcellularLocation>
</comment>
<comment type="similarity">
    <text evidence="1">Belongs to the ABC transporter superfamily. Lipoprotein translocase (TC 3.A.1.125) family.</text>
</comment>
<comment type="sequence caution" evidence="2">
    <conflict type="erroneous initiation">
        <sequence resource="EMBL-CDS" id="ABG59496"/>
    </conflict>
</comment>
<gene>
    <name evidence="1" type="primary">lolD</name>
    <name type="ordered locus">CHU_2233</name>
</gene>
<protein>
    <recommendedName>
        <fullName evidence="1">Lipoprotein-releasing system ATP-binding protein LolD</fullName>
        <ecNumber evidence="1">7.6.2.-</ecNumber>
    </recommendedName>
</protein>